<proteinExistence type="inferred from homology"/>
<accession>Q1IDE6</accession>
<dbReference type="EC" id="3.4.11.-" evidence="1"/>
<dbReference type="EMBL" id="CT573326">
    <property type="protein sequence ID" value="CAK14313.1"/>
    <property type="molecule type" value="Genomic_DNA"/>
</dbReference>
<dbReference type="RefSeq" id="WP_011532729.1">
    <property type="nucleotide sequence ID" value="NC_008027.1"/>
</dbReference>
<dbReference type="SMR" id="Q1IDE6"/>
<dbReference type="STRING" id="384676.PSEEN1442"/>
<dbReference type="GeneID" id="32804699"/>
<dbReference type="KEGG" id="pen:PSEEN1442"/>
<dbReference type="eggNOG" id="COG1362">
    <property type="taxonomic scope" value="Bacteria"/>
</dbReference>
<dbReference type="HOGENOM" id="CLU_019532_2_0_6"/>
<dbReference type="OrthoDB" id="5288740at2"/>
<dbReference type="Proteomes" id="UP000000658">
    <property type="component" value="Chromosome"/>
</dbReference>
<dbReference type="GO" id="GO:0005737">
    <property type="term" value="C:cytoplasm"/>
    <property type="evidence" value="ECO:0007669"/>
    <property type="project" value="UniProtKB-ARBA"/>
</dbReference>
<dbReference type="GO" id="GO:0004177">
    <property type="term" value="F:aminopeptidase activity"/>
    <property type="evidence" value="ECO:0007669"/>
    <property type="project" value="UniProtKB-UniRule"/>
</dbReference>
<dbReference type="GO" id="GO:0008237">
    <property type="term" value="F:metallopeptidase activity"/>
    <property type="evidence" value="ECO:0007669"/>
    <property type="project" value="UniProtKB-UniRule"/>
</dbReference>
<dbReference type="GO" id="GO:0008270">
    <property type="term" value="F:zinc ion binding"/>
    <property type="evidence" value="ECO:0007669"/>
    <property type="project" value="UniProtKB-UniRule"/>
</dbReference>
<dbReference type="GO" id="GO:0006508">
    <property type="term" value="P:proteolysis"/>
    <property type="evidence" value="ECO:0007669"/>
    <property type="project" value="UniProtKB-UniRule"/>
</dbReference>
<dbReference type="CDD" id="cd05658">
    <property type="entry name" value="M18_DAP"/>
    <property type="match status" value="1"/>
</dbReference>
<dbReference type="FunFam" id="2.30.250.10:FF:000003">
    <property type="entry name" value="Probable M18 family aminopeptidase 2"/>
    <property type="match status" value="1"/>
</dbReference>
<dbReference type="Gene3D" id="2.30.250.10">
    <property type="entry name" value="Aminopeptidase i, Domain 2"/>
    <property type="match status" value="1"/>
</dbReference>
<dbReference type="Gene3D" id="3.40.630.10">
    <property type="entry name" value="Zn peptidases"/>
    <property type="match status" value="1"/>
</dbReference>
<dbReference type="HAMAP" id="MF_00467">
    <property type="entry name" value="Aminopeptidase_M18_2"/>
    <property type="match status" value="1"/>
</dbReference>
<dbReference type="InterPro" id="IPR022984">
    <property type="entry name" value="M18_aminopeptidase_2"/>
</dbReference>
<dbReference type="InterPro" id="IPR001948">
    <property type="entry name" value="Peptidase_M18"/>
</dbReference>
<dbReference type="InterPro" id="IPR023358">
    <property type="entry name" value="Peptidase_M18_dom2"/>
</dbReference>
<dbReference type="NCBIfam" id="NF002759">
    <property type="entry name" value="PRK02813.1"/>
    <property type="match status" value="1"/>
</dbReference>
<dbReference type="PANTHER" id="PTHR28570">
    <property type="entry name" value="ASPARTYL AMINOPEPTIDASE"/>
    <property type="match status" value="1"/>
</dbReference>
<dbReference type="PANTHER" id="PTHR28570:SF3">
    <property type="entry name" value="ASPARTYL AMINOPEPTIDASE"/>
    <property type="match status" value="1"/>
</dbReference>
<dbReference type="Pfam" id="PF02127">
    <property type="entry name" value="Peptidase_M18"/>
    <property type="match status" value="1"/>
</dbReference>
<dbReference type="PRINTS" id="PR00932">
    <property type="entry name" value="AMINO1PTASE"/>
</dbReference>
<dbReference type="SUPFAM" id="SSF101821">
    <property type="entry name" value="Aminopeptidase/glucanase lid domain"/>
    <property type="match status" value="1"/>
</dbReference>
<dbReference type="SUPFAM" id="SSF53187">
    <property type="entry name" value="Zn-dependent exopeptidases"/>
    <property type="match status" value="1"/>
</dbReference>
<gene>
    <name evidence="1" type="primary">apeB</name>
    <name type="ordered locus">PSEEN1442</name>
</gene>
<organism>
    <name type="scientific">Pseudomonas entomophila (strain L48)</name>
    <dbReference type="NCBI Taxonomy" id="384676"/>
    <lineage>
        <taxon>Bacteria</taxon>
        <taxon>Pseudomonadati</taxon>
        <taxon>Pseudomonadota</taxon>
        <taxon>Gammaproteobacteria</taxon>
        <taxon>Pseudomonadales</taxon>
        <taxon>Pseudomonadaceae</taxon>
        <taxon>Pseudomonas</taxon>
    </lineage>
</organism>
<sequence>MRDALNAGLIEFLKASPTPFHATASLVQRLEAAGYQRLDERDSWATVPGGRYYVTRNDSSIIAIKLGKLSPLLGGIRMVGAHTDSPCLRVKPQPELQRQGFLQLGVEVYGGALLAPWFDRDLSLAGRVTFRRDGKVESQLIDFKLPIAVIPNLAIHLNRTANEGWQINPQTELPPILAQVAGDERVDFRALLTEQLAREHDLNADVVLDYELSFYDTQDAALIGLNGDFIAAARLDNLLSCYAGLQALLNADSDETCVLVCNDHEEVGSCSACGADGPMLEQTLQRLLPDGDDYVRAIQRSLMVSADNAHGVHPNYADKHDGNHGPKLNAGPVIKVNNNQRYATNSETAGFFRHLCMAEEVPVQSFVVRSDMGCGSTIGPITASHLGVRTVDIGLPTFAMHSIRELCGSHDLAHLVKVLTAFYRSRELP</sequence>
<keyword id="KW-0031">Aminopeptidase</keyword>
<keyword id="KW-0378">Hydrolase</keyword>
<keyword id="KW-0479">Metal-binding</keyword>
<keyword id="KW-0482">Metalloprotease</keyword>
<keyword id="KW-0645">Protease</keyword>
<keyword id="KW-0862">Zinc</keyword>
<reference key="1">
    <citation type="journal article" date="2006" name="Nat. Biotechnol.">
        <title>Complete genome sequence of the entomopathogenic and metabolically versatile soil bacterium Pseudomonas entomophila.</title>
        <authorList>
            <person name="Vodovar N."/>
            <person name="Vallenet D."/>
            <person name="Cruveiller S."/>
            <person name="Rouy Z."/>
            <person name="Barbe V."/>
            <person name="Acosta C."/>
            <person name="Cattolico L."/>
            <person name="Jubin C."/>
            <person name="Lajus A."/>
            <person name="Segurens B."/>
            <person name="Vacherie B."/>
            <person name="Wincker P."/>
            <person name="Weissenbach J."/>
            <person name="Lemaitre B."/>
            <person name="Medigue C."/>
            <person name="Boccard F."/>
        </authorList>
    </citation>
    <scope>NUCLEOTIDE SEQUENCE [LARGE SCALE GENOMIC DNA]</scope>
    <source>
        <strain>L48</strain>
    </source>
</reference>
<comment type="cofactor">
    <cofactor evidence="1">
        <name>Zn(2+)</name>
        <dbReference type="ChEBI" id="CHEBI:29105"/>
    </cofactor>
</comment>
<comment type="similarity">
    <text evidence="1">Belongs to the peptidase M18 family.</text>
</comment>
<feature type="chain" id="PRO_1000013703" description="Probable M18 family aminopeptidase 2">
    <location>
        <begin position="1"/>
        <end position="429"/>
    </location>
</feature>
<feature type="binding site" evidence="1">
    <location>
        <position position="82"/>
    </location>
    <ligand>
        <name>Zn(2+)</name>
        <dbReference type="ChEBI" id="CHEBI:29105"/>
    </ligand>
</feature>
<feature type="binding site" evidence="1">
    <location>
        <position position="156"/>
    </location>
    <ligand>
        <name>Zn(2+)</name>
        <dbReference type="ChEBI" id="CHEBI:29105"/>
    </ligand>
</feature>
<feature type="binding site" evidence="1">
    <location>
        <position position="401"/>
    </location>
    <ligand>
        <name>Zn(2+)</name>
        <dbReference type="ChEBI" id="CHEBI:29105"/>
    </ligand>
</feature>
<evidence type="ECO:0000255" key="1">
    <source>
        <dbReference type="HAMAP-Rule" id="MF_00467"/>
    </source>
</evidence>
<name>APEB_PSEE4</name>
<protein>
    <recommendedName>
        <fullName evidence="1">Probable M18 family aminopeptidase 2</fullName>
        <ecNumber evidence="1">3.4.11.-</ecNumber>
    </recommendedName>
</protein>